<evidence type="ECO:0000250" key="1"/>
<evidence type="ECO:0000250" key="2">
    <source>
        <dbReference type="UniProtKB" id="P68104"/>
    </source>
</evidence>
<evidence type="ECO:0000305" key="3"/>
<accession>P13549</accession>
<accession>Q5D0D3</accession>
<accession>Q91732</accession>
<comment type="function">
    <text>This protein promotes the GTP-dependent binding of aminoacyl-tRNA to the A-site of ribosomes during protein biosynthesis.</text>
</comment>
<comment type="subcellular location">
    <subcellularLocation>
        <location>Cytoplasm</location>
    </subcellularLocation>
</comment>
<comment type="developmental stage">
    <text>3 EF-1-alpha are expressed under different developmental control in Xenopus laevis. This protein is expressed in embryos beginning at the mid-blastula transition and in adults cells.</text>
</comment>
<comment type="similarity">
    <text evidence="3">Belongs to the TRAFAC class translation factor GTPase superfamily. Classic translation factor GTPase family. EF-Tu/EF-1A subfamily.</text>
</comment>
<dbReference type="EMBL" id="M25504">
    <property type="protein sequence ID" value="AAA49700.1"/>
    <property type="molecule type" value="mRNA"/>
</dbReference>
<dbReference type="EMBL" id="X55324">
    <property type="protein sequence ID" value="CAA39027.1"/>
    <property type="molecule type" value="mRNA"/>
</dbReference>
<dbReference type="EMBL" id="M25697">
    <property type="protein sequence ID" value="AAB00075.1"/>
    <property type="molecule type" value="Genomic_DNA"/>
</dbReference>
<dbReference type="EMBL" id="BC041196">
    <property type="protein sequence ID" value="AAH41196.1"/>
    <property type="molecule type" value="mRNA"/>
</dbReference>
<dbReference type="EMBL" id="BC043843">
    <property type="protein sequence ID" value="AAH43843.1"/>
    <property type="molecule type" value="mRNA"/>
</dbReference>
<dbReference type="PIR" id="A60491">
    <property type="entry name" value="A60491"/>
</dbReference>
<dbReference type="RefSeq" id="NP_001080911.1">
    <property type="nucleotide sequence ID" value="NM_001087442.1"/>
</dbReference>
<dbReference type="RefSeq" id="XP_018096064.1">
    <property type="nucleotide sequence ID" value="XM_018240575.1"/>
</dbReference>
<dbReference type="SMR" id="P13549"/>
<dbReference type="BioGRID" id="98848">
    <property type="interactions" value="1"/>
</dbReference>
<dbReference type="DNASU" id="386604"/>
<dbReference type="GeneID" id="108704161"/>
<dbReference type="GeneID" id="386604"/>
<dbReference type="KEGG" id="xla:108704161"/>
<dbReference type="AGR" id="Xenbase:XB-GENE-17330683"/>
<dbReference type="CTD" id="108704161"/>
<dbReference type="CTD" id="386604"/>
<dbReference type="Xenbase" id="XB-GENE-17330683">
    <property type="gene designation" value="eef1a1.L"/>
</dbReference>
<dbReference type="OMA" id="FAPQNIT"/>
<dbReference type="OrthoDB" id="342024at2759"/>
<dbReference type="Proteomes" id="UP000186698">
    <property type="component" value="Chromosome 5L"/>
</dbReference>
<dbReference type="Bgee" id="108704161">
    <property type="expression patterns" value="Expressed in intestine and 19 other cell types or tissues"/>
</dbReference>
<dbReference type="GO" id="GO:0005737">
    <property type="term" value="C:cytoplasm"/>
    <property type="evidence" value="ECO:0007669"/>
    <property type="project" value="UniProtKB-SubCell"/>
</dbReference>
<dbReference type="GO" id="GO:0005525">
    <property type="term" value="F:GTP binding"/>
    <property type="evidence" value="ECO:0007669"/>
    <property type="project" value="UniProtKB-KW"/>
</dbReference>
<dbReference type="GO" id="GO:0003924">
    <property type="term" value="F:GTPase activity"/>
    <property type="evidence" value="ECO:0000318"/>
    <property type="project" value="GO_Central"/>
</dbReference>
<dbReference type="GO" id="GO:0003746">
    <property type="term" value="F:translation elongation factor activity"/>
    <property type="evidence" value="ECO:0000318"/>
    <property type="project" value="GO_Central"/>
</dbReference>
<dbReference type="GO" id="GO:0006412">
    <property type="term" value="P:translation"/>
    <property type="evidence" value="ECO:0000318"/>
    <property type="project" value="GO_Central"/>
</dbReference>
<dbReference type="GO" id="GO:0006414">
    <property type="term" value="P:translational elongation"/>
    <property type="evidence" value="ECO:0000318"/>
    <property type="project" value="GO_Central"/>
</dbReference>
<dbReference type="CDD" id="cd01883">
    <property type="entry name" value="EF1_alpha"/>
    <property type="match status" value="1"/>
</dbReference>
<dbReference type="CDD" id="cd03693">
    <property type="entry name" value="EF1_alpha_II"/>
    <property type="match status" value="1"/>
</dbReference>
<dbReference type="CDD" id="cd03705">
    <property type="entry name" value="EF1_alpha_III"/>
    <property type="match status" value="1"/>
</dbReference>
<dbReference type="FunFam" id="2.40.30.10:FF:000005">
    <property type="entry name" value="Elongation factor 1-alpha"/>
    <property type="match status" value="1"/>
</dbReference>
<dbReference type="FunFam" id="3.40.50.300:FF:000090">
    <property type="entry name" value="Elongation factor 1-alpha"/>
    <property type="match status" value="1"/>
</dbReference>
<dbReference type="FunFam" id="2.40.30.10:FF:000168">
    <property type="entry name" value="Elongation factor 1-alpha 2"/>
    <property type="match status" value="1"/>
</dbReference>
<dbReference type="Gene3D" id="3.40.50.300">
    <property type="entry name" value="P-loop containing nucleotide triphosphate hydrolases"/>
    <property type="match status" value="1"/>
</dbReference>
<dbReference type="Gene3D" id="2.40.30.10">
    <property type="entry name" value="Translation factors"/>
    <property type="match status" value="2"/>
</dbReference>
<dbReference type="HAMAP" id="MF_00118_A">
    <property type="entry name" value="EF_Tu_A"/>
    <property type="match status" value="1"/>
</dbReference>
<dbReference type="InterPro" id="IPR004161">
    <property type="entry name" value="EFTu-like_2"/>
</dbReference>
<dbReference type="InterPro" id="IPR031157">
    <property type="entry name" value="G_TR_CS"/>
</dbReference>
<dbReference type="InterPro" id="IPR054696">
    <property type="entry name" value="GTP-eEF1A_C"/>
</dbReference>
<dbReference type="InterPro" id="IPR027417">
    <property type="entry name" value="P-loop_NTPase"/>
</dbReference>
<dbReference type="InterPro" id="IPR000795">
    <property type="entry name" value="T_Tr_GTP-bd_dom"/>
</dbReference>
<dbReference type="InterPro" id="IPR050100">
    <property type="entry name" value="TRAFAC_GTPase_members"/>
</dbReference>
<dbReference type="InterPro" id="IPR009000">
    <property type="entry name" value="Transl_B-barrel_sf"/>
</dbReference>
<dbReference type="InterPro" id="IPR009001">
    <property type="entry name" value="Transl_elong_EF1A/Init_IF2_C"/>
</dbReference>
<dbReference type="InterPro" id="IPR004539">
    <property type="entry name" value="Transl_elong_EF1A_euk/arc"/>
</dbReference>
<dbReference type="NCBIfam" id="TIGR00483">
    <property type="entry name" value="EF-1_alpha"/>
    <property type="match status" value="1"/>
</dbReference>
<dbReference type="NCBIfam" id="NF008969">
    <property type="entry name" value="PRK12317.1"/>
    <property type="match status" value="1"/>
</dbReference>
<dbReference type="PANTHER" id="PTHR23115">
    <property type="entry name" value="TRANSLATION FACTOR"/>
    <property type="match status" value="1"/>
</dbReference>
<dbReference type="Pfam" id="PF22594">
    <property type="entry name" value="GTP-eEF1A_C"/>
    <property type="match status" value="1"/>
</dbReference>
<dbReference type="Pfam" id="PF00009">
    <property type="entry name" value="GTP_EFTU"/>
    <property type="match status" value="1"/>
</dbReference>
<dbReference type="Pfam" id="PF03144">
    <property type="entry name" value="GTP_EFTU_D2"/>
    <property type="match status" value="1"/>
</dbReference>
<dbReference type="PRINTS" id="PR00315">
    <property type="entry name" value="ELONGATNFCT"/>
</dbReference>
<dbReference type="SUPFAM" id="SSF50465">
    <property type="entry name" value="EF-Tu/eEF-1alpha/eIF2-gamma C-terminal domain"/>
    <property type="match status" value="1"/>
</dbReference>
<dbReference type="SUPFAM" id="SSF52540">
    <property type="entry name" value="P-loop containing nucleoside triphosphate hydrolases"/>
    <property type="match status" value="1"/>
</dbReference>
<dbReference type="SUPFAM" id="SSF50447">
    <property type="entry name" value="Translation proteins"/>
    <property type="match status" value="1"/>
</dbReference>
<dbReference type="PROSITE" id="PS00301">
    <property type="entry name" value="G_TR_1"/>
    <property type="match status" value="1"/>
</dbReference>
<dbReference type="PROSITE" id="PS51722">
    <property type="entry name" value="G_TR_2"/>
    <property type="match status" value="1"/>
</dbReference>
<sequence>MGKEKTHINIVVIGHVDSGKSTTTGHLIYKCGGIDKRTIEKFEKEAAEMGKGSFKYAWVLDKLKAERERGITIDISLWKFETSKYYVTIIDAPGHRDFIKNMITGTSQADCAVLIVAAGVGEFEAGISKNGQTREHALLAYTLGVKQLIVGINKMDSTEPPYSQKRYEEIVKEVSTYIKKIGYNPDTVAFVPISGWNGDNMLEPSPNMPWFKGWKITRKEGSGSGTTLLEALDCILPPSRPTDKPLRLPLQDVYKIGGIGTVPVGRVETGVIKPGMVVTFAPVNVTTEVKSVEMHHEALTEAVPGDNVGFNVKNVSVKDVRRGNVAGDSKNDPPMEAGSFTAQVIILNHPGQIGAGYAPVLDCHTAHIACKFAELKEKIDRRSGKKLEDNPKFLKSGDAAIVDMIPGKPMCVESFSDYPPLGRFAVRDMRQTVAVGVIKAVEKKAAGSGKVTKSAQKAAKTK</sequence>
<reference key="1">
    <citation type="journal article" date="1989" name="Dev. Biol.">
        <title>The mRNA encoding elongation factor 1-alpha (EF-1 alpha) is a major transcript at the midblastula transition in Xenopus.</title>
        <authorList>
            <person name="Krieg P.A."/>
            <person name="Varnum S.M."/>
            <person name="Wormington W.M."/>
            <person name="Melton D.A."/>
        </authorList>
    </citation>
    <scope>NUCLEOTIDE SEQUENCE [MRNA]</scope>
    <source>
        <tissue>Embryo</tissue>
    </source>
</reference>
<reference key="2">
    <citation type="journal article" date="1990" name="Differentiation">
        <title>Two different mRNAs coding for identical elongation factor 1 alpha (EF-1 alpha) polypeptides in Xenopus laevis embryos.</title>
        <authorList>
            <person name="Poeting A."/>
            <person name="Danker K."/>
            <person name="Hartmann L."/>
            <person name="Koester M."/>
            <person name="Wedlich D."/>
            <person name="Knoechel W."/>
        </authorList>
    </citation>
    <scope>NUCLEOTIDE SEQUENCE [MRNA]</scope>
</reference>
<reference key="3">
    <citation type="journal article" date="1991" name="J. Cell Biol.">
        <title>42Sp48 in previtellogenic Xenopus oocytes is structurally homologous to EF-1 alpha and may be a stage-specific elongation factor.</title>
        <authorList>
            <person name="Coppard N.J."/>
            <person name="Poulsen K."/>
            <person name="Madsen H.O."/>
            <person name="Frydenberg J."/>
            <person name="Clark B.F.C."/>
        </authorList>
    </citation>
    <scope>NUCLEOTIDE SEQUENCE [MRNA]</scope>
</reference>
<reference key="4">
    <citation type="journal article" date="1995" name="Dev. Genet.">
        <title>A Xenopus laevis gene encoding EF-1 alpha S, the somatic form of elongation factor 1 alpha: sequence, structure, and identification of regulatory elements required for embryonic transcription.</title>
        <authorList>
            <person name="Johnson A.D."/>
            <person name="Krieg P.A."/>
        </authorList>
    </citation>
    <scope>NUCLEOTIDE SEQUENCE [GENOMIC DNA]</scope>
</reference>
<reference key="5">
    <citation type="submission" date="2003-01" db="EMBL/GenBank/DDBJ databases">
        <authorList>
            <consortium name="NIH - Xenopus Gene Collection (XGC) project"/>
        </authorList>
    </citation>
    <scope>NUCLEOTIDE SEQUENCE [LARGE SCALE MRNA]</scope>
    <source>
        <tissue>Embryo</tissue>
    </source>
</reference>
<proteinExistence type="evidence at transcript level"/>
<organism>
    <name type="scientific">Xenopus laevis</name>
    <name type="common">African clawed frog</name>
    <dbReference type="NCBI Taxonomy" id="8355"/>
    <lineage>
        <taxon>Eukaryota</taxon>
        <taxon>Metazoa</taxon>
        <taxon>Chordata</taxon>
        <taxon>Craniata</taxon>
        <taxon>Vertebrata</taxon>
        <taxon>Euteleostomi</taxon>
        <taxon>Amphibia</taxon>
        <taxon>Batrachia</taxon>
        <taxon>Anura</taxon>
        <taxon>Pipoidea</taxon>
        <taxon>Pipidae</taxon>
        <taxon>Xenopodinae</taxon>
        <taxon>Xenopus</taxon>
        <taxon>Xenopus</taxon>
    </lineage>
</organism>
<feature type="initiator methionine" description="Removed" evidence="2">
    <location>
        <position position="1"/>
    </location>
</feature>
<feature type="chain" id="PRO_0000090898" description="Elongation factor 1-alpha, somatic form">
    <location>
        <begin position="2"/>
        <end position="462"/>
    </location>
</feature>
<feature type="domain" description="tr-type G">
    <location>
        <begin position="5"/>
        <end position="242"/>
    </location>
</feature>
<feature type="region of interest" description="G1" evidence="1">
    <location>
        <begin position="14"/>
        <end position="21"/>
    </location>
</feature>
<feature type="region of interest" description="G2" evidence="1">
    <location>
        <begin position="70"/>
        <end position="74"/>
    </location>
</feature>
<feature type="region of interest" description="G3" evidence="1">
    <location>
        <begin position="91"/>
        <end position="94"/>
    </location>
</feature>
<feature type="region of interest" description="G4" evidence="1">
    <location>
        <begin position="153"/>
        <end position="156"/>
    </location>
</feature>
<feature type="region of interest" description="G5" evidence="1">
    <location>
        <begin position="194"/>
        <end position="196"/>
    </location>
</feature>
<feature type="binding site" evidence="1">
    <location>
        <begin position="14"/>
        <end position="21"/>
    </location>
    <ligand>
        <name>GTP</name>
        <dbReference type="ChEBI" id="CHEBI:37565"/>
    </ligand>
</feature>
<feature type="binding site" evidence="1">
    <location>
        <begin position="91"/>
        <end position="95"/>
    </location>
    <ligand>
        <name>GTP</name>
        <dbReference type="ChEBI" id="CHEBI:37565"/>
    </ligand>
</feature>
<feature type="binding site" evidence="1">
    <location>
        <begin position="153"/>
        <end position="156"/>
    </location>
    <ligand>
        <name>GTP</name>
        <dbReference type="ChEBI" id="CHEBI:37565"/>
    </ligand>
</feature>
<feature type="modified residue" description="N,N,N-trimethylglycine" evidence="2">
    <location>
        <position position="2"/>
    </location>
</feature>
<feature type="modified residue" description="5-glutamyl glycerylphosphorylethanolamine" evidence="1">
    <location>
        <position position="301"/>
    </location>
</feature>
<feature type="modified residue" description="5-glutamyl glycerylphosphorylethanolamine" evidence="1">
    <location>
        <position position="374"/>
    </location>
</feature>
<feature type="sequence conflict" description="In Ref. 1; AAA49700." evidence="3" ref="1">
    <original>N</original>
    <variation>K</variation>
    <location>
        <position position="9"/>
    </location>
</feature>
<feature type="sequence conflict" description="In Ref. 1; AAA49700." evidence="3" ref="1">
    <original>N</original>
    <variation>I</variation>
    <location>
        <position position="331"/>
    </location>
</feature>
<feature type="sequence conflict" description="In Ref. 1; AAA49700." evidence="3" ref="1">
    <original>V</original>
    <variation>L</variation>
    <location>
        <position position="435"/>
    </location>
</feature>
<protein>
    <recommendedName>
        <fullName>Elongation factor 1-alpha, somatic form</fullName>
        <shortName>EF-1-alpha-S</shortName>
    </recommendedName>
</protein>
<gene>
    <name type="primary">eef1as</name>
</gene>
<name>EF1A0_XENLA</name>
<keyword id="KW-0963">Cytoplasm</keyword>
<keyword id="KW-0251">Elongation factor</keyword>
<keyword id="KW-0342">GTP-binding</keyword>
<keyword id="KW-0488">Methylation</keyword>
<keyword id="KW-0547">Nucleotide-binding</keyword>
<keyword id="KW-0597">Phosphoprotein</keyword>
<keyword id="KW-0648">Protein biosynthesis</keyword>
<keyword id="KW-1185">Reference proteome</keyword>